<proteinExistence type="inferred from homology"/>
<evidence type="ECO:0000255" key="1">
    <source>
        <dbReference type="HAMAP-Rule" id="MF_01690"/>
    </source>
</evidence>
<gene>
    <name evidence="1" type="primary">dapE</name>
    <name type="ordered locus">BQ00460</name>
</gene>
<dbReference type="EC" id="3.5.1.18" evidence="1"/>
<dbReference type="EMBL" id="BX897700">
    <property type="protein sequence ID" value="CAF25553.1"/>
    <property type="molecule type" value="Genomic_DNA"/>
</dbReference>
<dbReference type="RefSeq" id="WP_011178881.1">
    <property type="nucleotide sequence ID" value="NC_005955.1"/>
</dbReference>
<dbReference type="SMR" id="Q6G1H9"/>
<dbReference type="KEGG" id="bqu:BQ00460"/>
<dbReference type="eggNOG" id="COG0624">
    <property type="taxonomic scope" value="Bacteria"/>
</dbReference>
<dbReference type="HOGENOM" id="CLU_021802_4_0_5"/>
<dbReference type="OrthoDB" id="9809784at2"/>
<dbReference type="UniPathway" id="UPA00034">
    <property type="reaction ID" value="UER00021"/>
</dbReference>
<dbReference type="Proteomes" id="UP000000597">
    <property type="component" value="Chromosome"/>
</dbReference>
<dbReference type="GO" id="GO:0008777">
    <property type="term" value="F:acetylornithine deacetylase activity"/>
    <property type="evidence" value="ECO:0007669"/>
    <property type="project" value="TreeGrafter"/>
</dbReference>
<dbReference type="GO" id="GO:0050897">
    <property type="term" value="F:cobalt ion binding"/>
    <property type="evidence" value="ECO:0007669"/>
    <property type="project" value="UniProtKB-UniRule"/>
</dbReference>
<dbReference type="GO" id="GO:0009014">
    <property type="term" value="F:succinyl-diaminopimelate desuccinylase activity"/>
    <property type="evidence" value="ECO:0007669"/>
    <property type="project" value="UniProtKB-UniRule"/>
</dbReference>
<dbReference type="GO" id="GO:0008270">
    <property type="term" value="F:zinc ion binding"/>
    <property type="evidence" value="ECO:0007669"/>
    <property type="project" value="UniProtKB-UniRule"/>
</dbReference>
<dbReference type="GO" id="GO:0019877">
    <property type="term" value="P:diaminopimelate biosynthetic process"/>
    <property type="evidence" value="ECO:0007669"/>
    <property type="project" value="UniProtKB-UniRule"/>
</dbReference>
<dbReference type="GO" id="GO:0006526">
    <property type="term" value="P:L-arginine biosynthetic process"/>
    <property type="evidence" value="ECO:0007669"/>
    <property type="project" value="TreeGrafter"/>
</dbReference>
<dbReference type="GO" id="GO:0009089">
    <property type="term" value="P:lysine biosynthetic process via diaminopimelate"/>
    <property type="evidence" value="ECO:0007669"/>
    <property type="project" value="UniProtKB-UniRule"/>
</dbReference>
<dbReference type="CDD" id="cd03891">
    <property type="entry name" value="M20_DapE_proteobac"/>
    <property type="match status" value="1"/>
</dbReference>
<dbReference type="Gene3D" id="3.30.70.360">
    <property type="match status" value="1"/>
</dbReference>
<dbReference type="Gene3D" id="3.40.630.10">
    <property type="entry name" value="Zn peptidases"/>
    <property type="match status" value="2"/>
</dbReference>
<dbReference type="HAMAP" id="MF_01690">
    <property type="entry name" value="DapE"/>
    <property type="match status" value="1"/>
</dbReference>
<dbReference type="InterPro" id="IPR001261">
    <property type="entry name" value="ArgE/DapE_CS"/>
</dbReference>
<dbReference type="InterPro" id="IPR036264">
    <property type="entry name" value="Bact_exopeptidase_dim_dom"/>
</dbReference>
<dbReference type="InterPro" id="IPR005941">
    <property type="entry name" value="DapE_proteobac"/>
</dbReference>
<dbReference type="InterPro" id="IPR002933">
    <property type="entry name" value="Peptidase_M20"/>
</dbReference>
<dbReference type="InterPro" id="IPR011650">
    <property type="entry name" value="Peptidase_M20_dimer"/>
</dbReference>
<dbReference type="InterPro" id="IPR050072">
    <property type="entry name" value="Peptidase_M20A"/>
</dbReference>
<dbReference type="NCBIfam" id="TIGR01246">
    <property type="entry name" value="dapE_proteo"/>
    <property type="match status" value="1"/>
</dbReference>
<dbReference type="NCBIfam" id="NF009557">
    <property type="entry name" value="PRK13009.1"/>
    <property type="match status" value="1"/>
</dbReference>
<dbReference type="PANTHER" id="PTHR43808">
    <property type="entry name" value="ACETYLORNITHINE DEACETYLASE"/>
    <property type="match status" value="1"/>
</dbReference>
<dbReference type="PANTHER" id="PTHR43808:SF31">
    <property type="entry name" value="N-ACETYL-L-CITRULLINE DEACETYLASE"/>
    <property type="match status" value="1"/>
</dbReference>
<dbReference type="Pfam" id="PF07687">
    <property type="entry name" value="M20_dimer"/>
    <property type="match status" value="1"/>
</dbReference>
<dbReference type="Pfam" id="PF01546">
    <property type="entry name" value="Peptidase_M20"/>
    <property type="match status" value="1"/>
</dbReference>
<dbReference type="SUPFAM" id="SSF55031">
    <property type="entry name" value="Bacterial exopeptidase dimerisation domain"/>
    <property type="match status" value="1"/>
</dbReference>
<dbReference type="SUPFAM" id="SSF53187">
    <property type="entry name" value="Zn-dependent exopeptidases"/>
    <property type="match status" value="1"/>
</dbReference>
<dbReference type="PROSITE" id="PS00758">
    <property type="entry name" value="ARGE_DAPE_CPG2_1"/>
    <property type="match status" value="1"/>
</dbReference>
<dbReference type="PROSITE" id="PS00759">
    <property type="entry name" value="ARGE_DAPE_CPG2_2"/>
    <property type="match status" value="1"/>
</dbReference>
<accession>Q6G1H9</accession>
<comment type="function">
    <text evidence="1">Catalyzes the hydrolysis of N-succinyl-L,L-diaminopimelic acid (SDAP), forming succinate and LL-2,6-diaminopimelate (DAP), an intermediate involved in the bacterial biosynthesis of lysine and meso-diaminopimelic acid, an essential component of bacterial cell walls.</text>
</comment>
<comment type="catalytic activity">
    <reaction evidence="1">
        <text>N-succinyl-(2S,6S)-2,6-diaminopimelate + H2O = (2S,6S)-2,6-diaminopimelate + succinate</text>
        <dbReference type="Rhea" id="RHEA:22608"/>
        <dbReference type="ChEBI" id="CHEBI:15377"/>
        <dbReference type="ChEBI" id="CHEBI:30031"/>
        <dbReference type="ChEBI" id="CHEBI:57609"/>
        <dbReference type="ChEBI" id="CHEBI:58087"/>
        <dbReference type="EC" id="3.5.1.18"/>
    </reaction>
</comment>
<comment type="cofactor">
    <cofactor evidence="1">
        <name>Zn(2+)</name>
        <dbReference type="ChEBI" id="CHEBI:29105"/>
    </cofactor>
    <cofactor evidence="1">
        <name>Co(2+)</name>
        <dbReference type="ChEBI" id="CHEBI:48828"/>
    </cofactor>
    <text evidence="1">Binds 2 Zn(2+) or Co(2+) ions per subunit.</text>
</comment>
<comment type="pathway">
    <text evidence="1">Amino-acid biosynthesis; L-lysine biosynthesis via DAP pathway; LL-2,6-diaminopimelate from (S)-tetrahydrodipicolinate (succinylase route): step 3/3.</text>
</comment>
<comment type="subunit">
    <text evidence="1">Homodimer.</text>
</comment>
<comment type="similarity">
    <text evidence="1">Belongs to the peptidase M20A family. DapE subfamily.</text>
</comment>
<protein>
    <recommendedName>
        <fullName evidence="1">Succinyl-diaminopimelate desuccinylase</fullName>
        <shortName evidence="1">SDAP desuccinylase</shortName>
        <ecNumber evidence="1">3.5.1.18</ecNumber>
    </recommendedName>
    <alternativeName>
        <fullName evidence="1">N-succinyl-LL-2,6-diaminoheptanedioate amidohydrolase</fullName>
    </alternativeName>
</protein>
<keyword id="KW-0028">Amino-acid biosynthesis</keyword>
<keyword id="KW-0170">Cobalt</keyword>
<keyword id="KW-0220">Diaminopimelate biosynthesis</keyword>
<keyword id="KW-0378">Hydrolase</keyword>
<keyword id="KW-0457">Lysine biosynthesis</keyword>
<keyword id="KW-0479">Metal-binding</keyword>
<keyword id="KW-0862">Zinc</keyword>
<reference key="1">
    <citation type="journal article" date="2004" name="Proc. Natl. Acad. Sci. U.S.A.">
        <title>The louse-borne human pathogen Bartonella quintana is a genomic derivative of the zoonotic agent Bartonella henselae.</title>
        <authorList>
            <person name="Alsmark U.C.M."/>
            <person name="Frank A.C."/>
            <person name="Karlberg E.O."/>
            <person name="Legault B.-A."/>
            <person name="Ardell D.H."/>
            <person name="Canbaeck B."/>
            <person name="Eriksson A.-S."/>
            <person name="Naeslund A.K."/>
            <person name="Handley S.A."/>
            <person name="Huvet M."/>
            <person name="La Scola B."/>
            <person name="Holmberg M."/>
            <person name="Andersson S.G.E."/>
        </authorList>
    </citation>
    <scope>NUCLEOTIDE SEQUENCE [LARGE SCALE GENOMIC DNA]</scope>
    <source>
        <strain>Toulouse</strain>
    </source>
</reference>
<sequence>MPVLTDPLQLLQALIRCPSVTPYEAGALSTLEQILTKMGFNVKRPVFTDKNTEDVENLYAKMGGEGRHLMFAGHTDVVPPGALEDWTYPPFEGVIDQGKLYGRGAVDMKGGIACFVAALARILEKRSIKGMVSLLITGDEEGPALNGTVKLLKWAEQKGEKWTAALVGEPTSVKTVGDVIKIGRRGSLSGVVTVKGRQGHVAFPERAANPLPLAGKLIQALTQTALDRGTENFQPSNLELTTIDTDNPAVNVIPAQTTIRFNIRYNDVWTKETLMTEIEKRLASVQLKNNDYQYPYYQLEWIPSLGSVFITKNDKLIKTLSNAIESVTGNIPEYSTSGGTSDARFIKDYCPVVEFGLPGQTMHMVDECVTLDAIETLTSVYERFIVDFFA</sequence>
<organism>
    <name type="scientific">Bartonella quintana (strain Toulouse)</name>
    <name type="common">Rochalimaea quintana</name>
    <dbReference type="NCBI Taxonomy" id="283165"/>
    <lineage>
        <taxon>Bacteria</taxon>
        <taxon>Pseudomonadati</taxon>
        <taxon>Pseudomonadota</taxon>
        <taxon>Alphaproteobacteria</taxon>
        <taxon>Hyphomicrobiales</taxon>
        <taxon>Bartonellaceae</taxon>
        <taxon>Bartonella</taxon>
    </lineage>
</organism>
<feature type="chain" id="PRO_0000375471" description="Succinyl-diaminopimelate desuccinylase">
    <location>
        <begin position="1"/>
        <end position="390"/>
    </location>
</feature>
<feature type="active site" evidence="1">
    <location>
        <position position="76"/>
    </location>
</feature>
<feature type="active site" description="Proton acceptor" evidence="1">
    <location>
        <position position="140"/>
    </location>
</feature>
<feature type="binding site" evidence="1">
    <location>
        <position position="74"/>
    </location>
    <ligand>
        <name>Zn(2+)</name>
        <dbReference type="ChEBI" id="CHEBI:29105"/>
        <label>1</label>
    </ligand>
</feature>
<feature type="binding site" evidence="1">
    <location>
        <position position="107"/>
    </location>
    <ligand>
        <name>Zn(2+)</name>
        <dbReference type="ChEBI" id="CHEBI:29105"/>
        <label>1</label>
    </ligand>
</feature>
<feature type="binding site" evidence="1">
    <location>
        <position position="107"/>
    </location>
    <ligand>
        <name>Zn(2+)</name>
        <dbReference type="ChEBI" id="CHEBI:29105"/>
        <label>2</label>
    </ligand>
</feature>
<feature type="binding site" evidence="1">
    <location>
        <position position="141"/>
    </location>
    <ligand>
        <name>Zn(2+)</name>
        <dbReference type="ChEBI" id="CHEBI:29105"/>
        <label>2</label>
    </ligand>
</feature>
<feature type="binding site" evidence="1">
    <location>
        <position position="169"/>
    </location>
    <ligand>
        <name>Zn(2+)</name>
        <dbReference type="ChEBI" id="CHEBI:29105"/>
        <label>1</label>
    </ligand>
</feature>
<feature type="binding site" evidence="1">
    <location>
        <position position="363"/>
    </location>
    <ligand>
        <name>Zn(2+)</name>
        <dbReference type="ChEBI" id="CHEBI:29105"/>
        <label>2</label>
    </ligand>
</feature>
<name>DAPE_BARQU</name>